<dbReference type="EMBL" id="AM286280">
    <property type="protein sequence ID" value="CAL09709.1"/>
    <property type="molecule type" value="Genomic_DNA"/>
</dbReference>
<dbReference type="SMR" id="Q14FU7"/>
<dbReference type="KEGG" id="ftf:FTF1693c"/>
<dbReference type="HOGENOM" id="CLU_061989_0_0_6"/>
<dbReference type="GO" id="GO:0005829">
    <property type="term" value="C:cytosol"/>
    <property type="evidence" value="ECO:0007669"/>
    <property type="project" value="TreeGrafter"/>
</dbReference>
<dbReference type="GO" id="GO:0033194">
    <property type="term" value="P:response to hydroperoxide"/>
    <property type="evidence" value="ECO:0007669"/>
    <property type="project" value="TreeGrafter"/>
</dbReference>
<dbReference type="HAMAP" id="MF_00652">
    <property type="entry name" value="UPF0246"/>
    <property type="match status" value="1"/>
</dbReference>
<dbReference type="InterPro" id="IPR005583">
    <property type="entry name" value="YaaA"/>
</dbReference>
<dbReference type="NCBIfam" id="NF002542">
    <property type="entry name" value="PRK02101.1-3"/>
    <property type="match status" value="1"/>
</dbReference>
<dbReference type="PANTHER" id="PTHR30283:SF4">
    <property type="entry name" value="PEROXIDE STRESS RESISTANCE PROTEIN YAAA"/>
    <property type="match status" value="1"/>
</dbReference>
<dbReference type="PANTHER" id="PTHR30283">
    <property type="entry name" value="PEROXIDE STRESS RESPONSE PROTEIN YAAA"/>
    <property type="match status" value="1"/>
</dbReference>
<dbReference type="Pfam" id="PF03883">
    <property type="entry name" value="H2O2_YaaD"/>
    <property type="match status" value="1"/>
</dbReference>
<proteinExistence type="inferred from homology"/>
<evidence type="ECO:0000255" key="1">
    <source>
        <dbReference type="HAMAP-Rule" id="MF_00652"/>
    </source>
</evidence>
<reference key="1">
    <citation type="journal article" date="2007" name="PLoS ONE">
        <title>Genome sequencing shows that European isolates of Francisella tularensis subspecies tularensis are almost identical to US laboratory strain Schu S4.</title>
        <authorList>
            <person name="Chaudhuri R.R."/>
            <person name="Ren C.-P."/>
            <person name="Desmond L."/>
            <person name="Vincent G.A."/>
            <person name="Silman N.J."/>
            <person name="Brehm J.K."/>
            <person name="Elmore M.J."/>
            <person name="Hudson M.J."/>
            <person name="Forsman M."/>
            <person name="Isherwood K.E."/>
            <person name="Gurycova D."/>
            <person name="Minton N.P."/>
            <person name="Titball R.W."/>
            <person name="Pallen M.J."/>
            <person name="Vipond R."/>
        </authorList>
    </citation>
    <scope>NUCLEOTIDE SEQUENCE [LARGE SCALE GENOMIC DNA]</scope>
    <source>
        <strain>FSC 198</strain>
    </source>
</reference>
<name>Y1693_FRAT1</name>
<gene>
    <name type="ordered locus">FTF1693c</name>
</gene>
<protein>
    <recommendedName>
        <fullName evidence="1">UPF0246 protein FTF1693c</fullName>
    </recommendedName>
</protein>
<organism>
    <name type="scientific">Francisella tularensis subsp. tularensis (strain FSC 198)</name>
    <dbReference type="NCBI Taxonomy" id="393115"/>
    <lineage>
        <taxon>Bacteria</taxon>
        <taxon>Pseudomonadati</taxon>
        <taxon>Pseudomonadota</taxon>
        <taxon>Gammaproteobacteria</taxon>
        <taxon>Thiotrichales</taxon>
        <taxon>Francisellaceae</taxon>
        <taxon>Francisella</taxon>
    </lineage>
</organism>
<accession>Q14FU7</accession>
<sequence>MIIVISPAKSQNFEPIKTAYQFTQPIFKQQIIKLINTLKYYEVEEIEKLMKISPKLAEEVFAKHNSFNPNKYDNSNAKAAIFTFSGDVYKGLEADTLDNKTIEYAQNHLLMLSGLYGLVRPLDLIQAYRLEMGTNIKIDGKILHKYWQDKITTQLNEYFSQQQNKILINLASNEYSQAIDKKSLAVKWLDIDFKENKAGAYKTIGIHAKKARGLMTRYILENRIENVSDIKKFNVAGYQFNPDFSDENLLCFTR</sequence>
<comment type="similarity">
    <text evidence="1">Belongs to the UPF0246 family.</text>
</comment>
<feature type="chain" id="PRO_0000262020" description="UPF0246 protein FTF1693c">
    <location>
        <begin position="1"/>
        <end position="254"/>
    </location>
</feature>